<feature type="chain" id="PRO_0000266309" description="Guanylate kinase">
    <location>
        <begin position="1"/>
        <end position="216"/>
    </location>
</feature>
<feature type="domain" description="Guanylate kinase-like" evidence="1">
    <location>
        <begin position="11"/>
        <end position="189"/>
    </location>
</feature>
<feature type="binding site" evidence="1">
    <location>
        <begin position="18"/>
        <end position="25"/>
    </location>
    <ligand>
        <name>ATP</name>
        <dbReference type="ChEBI" id="CHEBI:30616"/>
    </ligand>
</feature>
<reference key="1">
    <citation type="journal article" date="2006" name="Genome Res.">
        <title>Skewed genomic variability in strains of the toxigenic bacterial pathogen, Clostridium perfringens.</title>
        <authorList>
            <person name="Myers G.S.A."/>
            <person name="Rasko D.A."/>
            <person name="Cheung J.K."/>
            <person name="Ravel J."/>
            <person name="Seshadri R."/>
            <person name="DeBoy R.T."/>
            <person name="Ren Q."/>
            <person name="Varga J."/>
            <person name="Awad M.M."/>
            <person name="Brinkac L.M."/>
            <person name="Daugherty S.C."/>
            <person name="Haft D.H."/>
            <person name="Dodson R.J."/>
            <person name="Madupu R."/>
            <person name="Nelson W.C."/>
            <person name="Rosovitz M.J."/>
            <person name="Sullivan S.A."/>
            <person name="Khouri H."/>
            <person name="Dimitrov G.I."/>
            <person name="Watkins K.L."/>
            <person name="Mulligan S."/>
            <person name="Benton J."/>
            <person name="Radune D."/>
            <person name="Fisher D.J."/>
            <person name="Atkins H.S."/>
            <person name="Hiscox T."/>
            <person name="Jost B.H."/>
            <person name="Billington S.J."/>
            <person name="Songer J.G."/>
            <person name="McClane B.A."/>
            <person name="Titball R.W."/>
            <person name="Rood J.I."/>
            <person name="Melville S.B."/>
            <person name="Paulsen I.T."/>
        </authorList>
    </citation>
    <scope>NUCLEOTIDE SEQUENCE [LARGE SCALE GENOMIC DNA]</scope>
    <source>
        <strain>SM101 / Type A</strain>
    </source>
</reference>
<sequence>MMNKIHKNNRGVLIVISGPSGAGKGTICKALLEKHDDIFISVSATTRNPRVGEVDGVNYHFLTKEEFKQRIAEDDFLEHAEVYGNYYGTPKSSVEKMLDEGKNVILEIDIQGALKVKEKATDGVFIFILPPSMEELKQRIIKRGSETPESLMTRFKSAYKEINYVSKYNYAVVNDNVEDAVKKIEAILLAEKCRVDRLKENLLESKEDEMHEQLYD</sequence>
<keyword id="KW-0067">ATP-binding</keyword>
<keyword id="KW-0963">Cytoplasm</keyword>
<keyword id="KW-0418">Kinase</keyword>
<keyword id="KW-0547">Nucleotide-binding</keyword>
<keyword id="KW-0808">Transferase</keyword>
<comment type="function">
    <text evidence="1">Essential for recycling GMP and indirectly, cGMP.</text>
</comment>
<comment type="catalytic activity">
    <reaction evidence="1">
        <text>GMP + ATP = GDP + ADP</text>
        <dbReference type="Rhea" id="RHEA:20780"/>
        <dbReference type="ChEBI" id="CHEBI:30616"/>
        <dbReference type="ChEBI" id="CHEBI:58115"/>
        <dbReference type="ChEBI" id="CHEBI:58189"/>
        <dbReference type="ChEBI" id="CHEBI:456216"/>
        <dbReference type="EC" id="2.7.4.8"/>
    </reaction>
</comment>
<comment type="subcellular location">
    <subcellularLocation>
        <location evidence="1">Cytoplasm</location>
    </subcellularLocation>
</comment>
<comment type="similarity">
    <text evidence="1">Belongs to the guanylate kinase family.</text>
</comment>
<gene>
    <name evidence="1" type="primary">gmk</name>
    <name type="ordered locus">CPR_1719</name>
</gene>
<evidence type="ECO:0000255" key="1">
    <source>
        <dbReference type="HAMAP-Rule" id="MF_00328"/>
    </source>
</evidence>
<proteinExistence type="inferred from homology"/>
<protein>
    <recommendedName>
        <fullName evidence="1">Guanylate kinase</fullName>
        <ecNumber evidence="1">2.7.4.8</ecNumber>
    </recommendedName>
    <alternativeName>
        <fullName evidence="1">GMP kinase</fullName>
    </alternativeName>
</protein>
<dbReference type="EC" id="2.7.4.8" evidence="1"/>
<dbReference type="EMBL" id="CP000312">
    <property type="protein sequence ID" value="ABG87421.1"/>
    <property type="molecule type" value="Genomic_DNA"/>
</dbReference>
<dbReference type="RefSeq" id="WP_011592634.1">
    <property type="nucleotide sequence ID" value="NC_008262.1"/>
</dbReference>
<dbReference type="SMR" id="Q0SS73"/>
<dbReference type="KEGG" id="cpr:CPR_1719"/>
<dbReference type="Proteomes" id="UP000001824">
    <property type="component" value="Chromosome"/>
</dbReference>
<dbReference type="GO" id="GO:0005829">
    <property type="term" value="C:cytosol"/>
    <property type="evidence" value="ECO:0007669"/>
    <property type="project" value="TreeGrafter"/>
</dbReference>
<dbReference type="GO" id="GO:0005524">
    <property type="term" value="F:ATP binding"/>
    <property type="evidence" value="ECO:0007669"/>
    <property type="project" value="UniProtKB-UniRule"/>
</dbReference>
<dbReference type="GO" id="GO:0004385">
    <property type="term" value="F:guanylate kinase activity"/>
    <property type="evidence" value="ECO:0007669"/>
    <property type="project" value="UniProtKB-UniRule"/>
</dbReference>
<dbReference type="CDD" id="cd00071">
    <property type="entry name" value="GMPK"/>
    <property type="match status" value="1"/>
</dbReference>
<dbReference type="FunFam" id="3.40.50.300:FF:000855">
    <property type="entry name" value="Guanylate kinase"/>
    <property type="match status" value="1"/>
</dbReference>
<dbReference type="FunFam" id="3.30.63.10:FF:000002">
    <property type="entry name" value="Guanylate kinase 1"/>
    <property type="match status" value="1"/>
</dbReference>
<dbReference type="Gene3D" id="3.30.63.10">
    <property type="entry name" value="Guanylate Kinase phosphate binding domain"/>
    <property type="match status" value="1"/>
</dbReference>
<dbReference type="Gene3D" id="3.40.50.300">
    <property type="entry name" value="P-loop containing nucleotide triphosphate hydrolases"/>
    <property type="match status" value="1"/>
</dbReference>
<dbReference type="HAMAP" id="MF_00328">
    <property type="entry name" value="Guanylate_kinase"/>
    <property type="match status" value="1"/>
</dbReference>
<dbReference type="InterPro" id="IPR008145">
    <property type="entry name" value="GK/Ca_channel_bsu"/>
</dbReference>
<dbReference type="InterPro" id="IPR008144">
    <property type="entry name" value="Guanylate_kin-like_dom"/>
</dbReference>
<dbReference type="InterPro" id="IPR017665">
    <property type="entry name" value="Guanylate_kinase"/>
</dbReference>
<dbReference type="InterPro" id="IPR020590">
    <property type="entry name" value="Guanylate_kinase_CS"/>
</dbReference>
<dbReference type="InterPro" id="IPR027417">
    <property type="entry name" value="P-loop_NTPase"/>
</dbReference>
<dbReference type="NCBIfam" id="TIGR03263">
    <property type="entry name" value="guanyl_kin"/>
    <property type="match status" value="1"/>
</dbReference>
<dbReference type="PANTHER" id="PTHR23117:SF13">
    <property type="entry name" value="GUANYLATE KINASE"/>
    <property type="match status" value="1"/>
</dbReference>
<dbReference type="PANTHER" id="PTHR23117">
    <property type="entry name" value="GUANYLATE KINASE-RELATED"/>
    <property type="match status" value="1"/>
</dbReference>
<dbReference type="Pfam" id="PF00625">
    <property type="entry name" value="Guanylate_kin"/>
    <property type="match status" value="1"/>
</dbReference>
<dbReference type="SMART" id="SM00072">
    <property type="entry name" value="GuKc"/>
    <property type="match status" value="1"/>
</dbReference>
<dbReference type="SUPFAM" id="SSF52540">
    <property type="entry name" value="P-loop containing nucleoside triphosphate hydrolases"/>
    <property type="match status" value="1"/>
</dbReference>
<dbReference type="PROSITE" id="PS00856">
    <property type="entry name" value="GUANYLATE_KINASE_1"/>
    <property type="match status" value="1"/>
</dbReference>
<dbReference type="PROSITE" id="PS50052">
    <property type="entry name" value="GUANYLATE_KINASE_2"/>
    <property type="match status" value="1"/>
</dbReference>
<accession>Q0SS73</accession>
<name>KGUA_CLOPS</name>
<organism>
    <name type="scientific">Clostridium perfringens (strain SM101 / Type A)</name>
    <dbReference type="NCBI Taxonomy" id="289380"/>
    <lineage>
        <taxon>Bacteria</taxon>
        <taxon>Bacillati</taxon>
        <taxon>Bacillota</taxon>
        <taxon>Clostridia</taxon>
        <taxon>Eubacteriales</taxon>
        <taxon>Clostridiaceae</taxon>
        <taxon>Clostridium</taxon>
    </lineage>
</organism>